<comment type="function">
    <text evidence="1">Broad range protease inhibitor (By similarity). Possible function in sperm maturation.</text>
</comment>
<comment type="subunit">
    <text evidence="1">Homotrimer; disulfide-linked.</text>
</comment>
<comment type="subcellular location">
    <subcellularLocation>
        <location evidence="1">Secreted</location>
    </subcellularLocation>
</comment>
<comment type="tissue specificity">
    <text evidence="4">Epididymis. Highest levels are found in the caput and proximal cauda regions. Lower levels in the distal cauda. Not detected in the efferent ducts.</text>
</comment>
<evidence type="ECO:0000250" key="1"/>
<evidence type="ECO:0000255" key="2"/>
<evidence type="ECO:0000255" key="3">
    <source>
        <dbReference type="PROSITE-ProRule" id="PRU00722"/>
    </source>
</evidence>
<evidence type="ECO:0000269" key="4">
    <source>
    </source>
</evidence>
<name>WFDC2_CANLF</name>
<gene>
    <name type="primary">WFDC2</name>
</gene>
<keyword id="KW-0062">Aspartic protease inhibitor</keyword>
<keyword id="KW-1015">Disulfide bond</keyword>
<keyword id="KW-0325">Glycoprotein</keyword>
<keyword id="KW-0646">Protease inhibitor</keyword>
<keyword id="KW-1185">Reference proteome</keyword>
<keyword id="KW-0677">Repeat</keyword>
<keyword id="KW-0964">Secreted</keyword>
<keyword id="KW-0722">Serine protease inhibitor</keyword>
<keyword id="KW-0732">Signal</keyword>
<keyword id="KW-0789">Thiol protease inhibitor</keyword>
<sequence length="124" mass="12951">MPACRPGPLAGALLLGLLLLGLPRVPGGEVEKTGVCPQLQADLNCTQECVSDAQCADNLKCCQAGCATICHLPNEKEGSCPQVNTDFPQLGLCQDQCQVDSHCPGLLKCCYNGCGKVSCVTPIF</sequence>
<dbReference type="EMBL" id="S77395">
    <property type="protein sequence ID" value="AAB34264.1"/>
    <property type="molecule type" value="mRNA"/>
</dbReference>
<dbReference type="PIR" id="I54768">
    <property type="entry name" value="I54768"/>
</dbReference>
<dbReference type="RefSeq" id="NP_001003241.1">
    <property type="nucleotide sequence ID" value="NM_001003241.1"/>
</dbReference>
<dbReference type="SMR" id="Q28894"/>
<dbReference type="FunCoup" id="Q28894">
    <property type="interactions" value="1"/>
</dbReference>
<dbReference type="STRING" id="9615.ENSCAFP00000014248"/>
<dbReference type="MEROPS" id="I17.004"/>
<dbReference type="GlyCosmos" id="Q28894">
    <property type="glycosylation" value="1 site, No reported glycans"/>
</dbReference>
<dbReference type="PaxDb" id="9612-ENSCAFP00000014248"/>
<dbReference type="GeneID" id="403919"/>
<dbReference type="KEGG" id="cfa:403919"/>
<dbReference type="CTD" id="10406"/>
<dbReference type="eggNOG" id="ENOG502SA8J">
    <property type="taxonomic scope" value="Eukaryota"/>
</dbReference>
<dbReference type="InParanoid" id="Q28894"/>
<dbReference type="OrthoDB" id="17779at33554"/>
<dbReference type="Proteomes" id="UP000002254">
    <property type="component" value="Unplaced"/>
</dbReference>
<dbReference type="Proteomes" id="UP000694429">
    <property type="component" value="Unplaced"/>
</dbReference>
<dbReference type="Proteomes" id="UP000694542">
    <property type="component" value="Unplaced"/>
</dbReference>
<dbReference type="Proteomes" id="UP000805418">
    <property type="component" value="Unplaced"/>
</dbReference>
<dbReference type="GO" id="GO:0005615">
    <property type="term" value="C:extracellular space"/>
    <property type="evidence" value="ECO:0000318"/>
    <property type="project" value="GO_Central"/>
</dbReference>
<dbReference type="GO" id="GO:0019828">
    <property type="term" value="F:aspartic-type endopeptidase inhibitor activity"/>
    <property type="evidence" value="ECO:0007669"/>
    <property type="project" value="UniProtKB-KW"/>
</dbReference>
<dbReference type="GO" id="GO:0004869">
    <property type="term" value="F:cysteine-type endopeptidase inhibitor activity"/>
    <property type="evidence" value="ECO:0007669"/>
    <property type="project" value="UniProtKB-KW"/>
</dbReference>
<dbReference type="GO" id="GO:0004867">
    <property type="term" value="F:serine-type endopeptidase inhibitor activity"/>
    <property type="evidence" value="ECO:0000318"/>
    <property type="project" value="GO_Central"/>
</dbReference>
<dbReference type="GO" id="GO:0019731">
    <property type="term" value="P:antibacterial humoral response"/>
    <property type="evidence" value="ECO:0000318"/>
    <property type="project" value="GO_Central"/>
</dbReference>
<dbReference type="GO" id="GO:0045087">
    <property type="term" value="P:innate immune response"/>
    <property type="evidence" value="ECO:0000318"/>
    <property type="project" value="GO_Central"/>
</dbReference>
<dbReference type="CDD" id="cd00199">
    <property type="entry name" value="WAP"/>
    <property type="match status" value="1"/>
</dbReference>
<dbReference type="FunFam" id="4.10.75.10:FF:000001">
    <property type="entry name" value="Anosmin 1"/>
    <property type="match status" value="1"/>
</dbReference>
<dbReference type="Gene3D" id="4.10.75.10">
    <property type="entry name" value="Elafin-like"/>
    <property type="match status" value="2"/>
</dbReference>
<dbReference type="InterPro" id="IPR036645">
    <property type="entry name" value="Elafin-like_sf"/>
</dbReference>
<dbReference type="InterPro" id="IPR008197">
    <property type="entry name" value="WAP_dom"/>
</dbReference>
<dbReference type="InterPro" id="IPR050514">
    <property type="entry name" value="WAP_four-disulfide_core"/>
</dbReference>
<dbReference type="PANTHER" id="PTHR19441:SF34">
    <property type="entry name" value="WAP FOUR-DISULFIDE CORE DOMAIN PROTEIN 2"/>
    <property type="match status" value="1"/>
</dbReference>
<dbReference type="PANTHER" id="PTHR19441">
    <property type="entry name" value="WHEY ACDIC PROTEIN WAP"/>
    <property type="match status" value="1"/>
</dbReference>
<dbReference type="Pfam" id="PF00095">
    <property type="entry name" value="WAP"/>
    <property type="match status" value="2"/>
</dbReference>
<dbReference type="PRINTS" id="PR00003">
    <property type="entry name" value="4DISULPHCORE"/>
</dbReference>
<dbReference type="SMART" id="SM00217">
    <property type="entry name" value="WAP"/>
    <property type="match status" value="2"/>
</dbReference>
<dbReference type="SUPFAM" id="SSF57256">
    <property type="entry name" value="Elafin-like"/>
    <property type="match status" value="2"/>
</dbReference>
<dbReference type="PROSITE" id="PS51390">
    <property type="entry name" value="WAP"/>
    <property type="match status" value="2"/>
</dbReference>
<accession>Q28894</accession>
<reference key="1">
    <citation type="journal article" date="1994" name="Int. J. Androl.">
        <title>Gene expression in the dog epididymis: a model for human epididymal function.</title>
        <authorList>
            <person name="Ellerbrock K."/>
            <person name="Pera I."/>
            <person name="Hartung S."/>
            <person name="Ivell R."/>
        </authorList>
    </citation>
    <scope>NUCLEOTIDE SEQUENCE [MRNA]</scope>
    <source>
        <tissue>Epididymis</tissue>
    </source>
</reference>
<reference key="2">
    <citation type="journal article" date="1994" name="Int. J. Androl.">
        <title>Regional variation of specific gene expression in the dog epididymis as revealed by in-situ transcript hybridization.</title>
        <authorList>
            <person name="Pera I."/>
            <person name="Ivell R."/>
            <person name="Kirchhoff C."/>
        </authorList>
    </citation>
    <scope>TISSUE SPECIFICITY</scope>
</reference>
<feature type="signal peptide" evidence="2">
    <location>
        <begin position="1"/>
        <end position="27"/>
    </location>
</feature>
<feature type="chain" id="PRO_0000041369" description="WAP four-disulfide core domain protein 2">
    <location>
        <begin position="28"/>
        <end position="124"/>
    </location>
</feature>
<feature type="domain" description="WAP 1" evidence="3">
    <location>
        <begin position="29"/>
        <end position="73"/>
    </location>
</feature>
<feature type="domain" description="WAP 2" evidence="3">
    <location>
        <begin position="74"/>
        <end position="123"/>
    </location>
</feature>
<feature type="glycosylation site" description="N-linked (GlcNAc...) asparagine" evidence="2">
    <location>
        <position position="44"/>
    </location>
</feature>
<feature type="disulfide bond" evidence="3">
    <location>
        <begin position="36"/>
        <end position="62"/>
    </location>
</feature>
<feature type="disulfide bond" evidence="3">
    <location>
        <begin position="45"/>
        <end position="66"/>
    </location>
</feature>
<feature type="disulfide bond" evidence="3">
    <location>
        <begin position="49"/>
        <end position="61"/>
    </location>
</feature>
<feature type="disulfide bond" evidence="3">
    <location>
        <begin position="55"/>
        <end position="70"/>
    </location>
</feature>
<feature type="disulfide bond" evidence="3">
    <location>
        <begin position="80"/>
        <end position="110"/>
    </location>
</feature>
<feature type="disulfide bond" evidence="3">
    <location>
        <begin position="93"/>
        <end position="114"/>
    </location>
</feature>
<feature type="disulfide bond" evidence="3">
    <location>
        <begin position="97"/>
        <end position="109"/>
    </location>
</feature>
<feature type="disulfide bond" evidence="3">
    <location>
        <begin position="103"/>
        <end position="119"/>
    </location>
</feature>
<organism>
    <name type="scientific">Canis lupus familiaris</name>
    <name type="common">Dog</name>
    <name type="synonym">Canis familiaris</name>
    <dbReference type="NCBI Taxonomy" id="9615"/>
    <lineage>
        <taxon>Eukaryota</taxon>
        <taxon>Metazoa</taxon>
        <taxon>Chordata</taxon>
        <taxon>Craniata</taxon>
        <taxon>Vertebrata</taxon>
        <taxon>Euteleostomi</taxon>
        <taxon>Mammalia</taxon>
        <taxon>Eutheria</taxon>
        <taxon>Laurasiatheria</taxon>
        <taxon>Carnivora</taxon>
        <taxon>Caniformia</taxon>
        <taxon>Canidae</taxon>
        <taxon>Canis</taxon>
    </lineage>
</organism>
<protein>
    <recommendedName>
        <fullName>WAP four-disulfide core domain protein 2</fullName>
    </recommendedName>
    <alternativeName>
        <fullName>Epididymal secretory protein E4</fullName>
        <shortName>CE4</shortName>
    </alternativeName>
    <alternativeName>
        <fullName>Major epididymis-specific protein E4</fullName>
    </alternativeName>
</protein>
<proteinExistence type="evidence at transcript level"/>